<organism>
    <name type="scientific">Cereibacter sphaeroides (strain ATCC 17023 / DSM 158 / JCM 6121 / CCUG 31486 / LMG 2827 / NBRC 12203 / NCIMB 8253 / ATH 2.4.1.)</name>
    <name type="common">Rhodobacter sphaeroides</name>
    <dbReference type="NCBI Taxonomy" id="272943"/>
    <lineage>
        <taxon>Bacteria</taxon>
        <taxon>Pseudomonadati</taxon>
        <taxon>Pseudomonadota</taxon>
        <taxon>Alphaproteobacteria</taxon>
        <taxon>Rhodobacterales</taxon>
        <taxon>Paracoccaceae</taxon>
        <taxon>Cereibacter</taxon>
    </lineage>
</organism>
<protein>
    <recommendedName>
        <fullName evidence="1">Small ribosomal subunit protein bS20</fullName>
    </recommendedName>
    <alternativeName>
        <fullName evidence="3">30S ribosomal protein S20</fullName>
    </alternativeName>
</protein>
<proteinExistence type="inferred from homology"/>
<comment type="function">
    <text evidence="1">Binds directly to 16S ribosomal RNA.</text>
</comment>
<comment type="similarity">
    <text evidence="1">Belongs to the bacterial ribosomal protein bS20 family.</text>
</comment>
<gene>
    <name evidence="1" type="primary">rpsT</name>
    <name type="ordered locus">RHOS4_29540</name>
    <name type="ORF">RSP_1341</name>
</gene>
<feature type="chain" id="PRO_0000224984" description="Small ribosomal subunit protein bS20">
    <location>
        <begin position="1"/>
        <end position="92"/>
    </location>
</feature>
<feature type="region of interest" description="Disordered" evidence="2">
    <location>
        <begin position="1"/>
        <end position="22"/>
    </location>
</feature>
<dbReference type="EMBL" id="CP000143">
    <property type="protein sequence ID" value="ABA80522.1"/>
    <property type="molecule type" value="Genomic_DNA"/>
</dbReference>
<dbReference type="RefSeq" id="WP_002721915.1">
    <property type="nucleotide sequence ID" value="NZ_CP030271.1"/>
</dbReference>
<dbReference type="RefSeq" id="YP_354423.1">
    <property type="nucleotide sequence ID" value="NC_007493.2"/>
</dbReference>
<dbReference type="SMR" id="Q3IY62"/>
<dbReference type="STRING" id="272943.RSP_1341"/>
<dbReference type="EnsemblBacteria" id="ABA80522">
    <property type="protein sequence ID" value="ABA80522"/>
    <property type="gene ID" value="RSP_1341"/>
</dbReference>
<dbReference type="GeneID" id="67448112"/>
<dbReference type="KEGG" id="rsp:RSP_1341"/>
<dbReference type="PATRIC" id="fig|272943.9.peg.3323"/>
<dbReference type="eggNOG" id="COG0268">
    <property type="taxonomic scope" value="Bacteria"/>
</dbReference>
<dbReference type="OrthoDB" id="9807974at2"/>
<dbReference type="PhylomeDB" id="Q3IY62"/>
<dbReference type="Proteomes" id="UP000002703">
    <property type="component" value="Chromosome 1"/>
</dbReference>
<dbReference type="GO" id="GO:0015935">
    <property type="term" value="C:small ribosomal subunit"/>
    <property type="evidence" value="ECO:0007669"/>
    <property type="project" value="TreeGrafter"/>
</dbReference>
<dbReference type="GO" id="GO:0070181">
    <property type="term" value="F:small ribosomal subunit rRNA binding"/>
    <property type="evidence" value="ECO:0007669"/>
    <property type="project" value="TreeGrafter"/>
</dbReference>
<dbReference type="GO" id="GO:0003735">
    <property type="term" value="F:structural constituent of ribosome"/>
    <property type="evidence" value="ECO:0007669"/>
    <property type="project" value="InterPro"/>
</dbReference>
<dbReference type="GO" id="GO:0006412">
    <property type="term" value="P:translation"/>
    <property type="evidence" value="ECO:0007669"/>
    <property type="project" value="UniProtKB-UniRule"/>
</dbReference>
<dbReference type="FunFam" id="1.20.58.110:FF:000001">
    <property type="entry name" value="30S ribosomal protein S20"/>
    <property type="match status" value="1"/>
</dbReference>
<dbReference type="Gene3D" id="1.20.58.110">
    <property type="entry name" value="Ribosomal protein S20"/>
    <property type="match status" value="1"/>
</dbReference>
<dbReference type="HAMAP" id="MF_00500">
    <property type="entry name" value="Ribosomal_bS20"/>
    <property type="match status" value="1"/>
</dbReference>
<dbReference type="InterPro" id="IPR002583">
    <property type="entry name" value="Ribosomal_bS20"/>
</dbReference>
<dbReference type="InterPro" id="IPR036510">
    <property type="entry name" value="Ribosomal_bS20_sf"/>
</dbReference>
<dbReference type="NCBIfam" id="TIGR00029">
    <property type="entry name" value="S20"/>
    <property type="match status" value="1"/>
</dbReference>
<dbReference type="PANTHER" id="PTHR33398">
    <property type="entry name" value="30S RIBOSOMAL PROTEIN S20"/>
    <property type="match status" value="1"/>
</dbReference>
<dbReference type="PANTHER" id="PTHR33398:SF1">
    <property type="entry name" value="SMALL RIBOSOMAL SUBUNIT PROTEIN BS20C"/>
    <property type="match status" value="1"/>
</dbReference>
<dbReference type="Pfam" id="PF01649">
    <property type="entry name" value="Ribosomal_S20p"/>
    <property type="match status" value="1"/>
</dbReference>
<dbReference type="SUPFAM" id="SSF46992">
    <property type="entry name" value="Ribosomal protein S20"/>
    <property type="match status" value="1"/>
</dbReference>
<evidence type="ECO:0000255" key="1">
    <source>
        <dbReference type="HAMAP-Rule" id="MF_00500"/>
    </source>
</evidence>
<evidence type="ECO:0000256" key="2">
    <source>
        <dbReference type="SAM" id="MobiDB-lite"/>
    </source>
</evidence>
<evidence type="ECO:0000305" key="3"/>
<keyword id="KW-1185">Reference proteome</keyword>
<keyword id="KW-0687">Ribonucleoprotein</keyword>
<keyword id="KW-0689">Ribosomal protein</keyword>
<keyword id="KW-0694">RNA-binding</keyword>
<keyword id="KW-0699">rRNA-binding</keyword>
<sequence>MANSPQSKKRARQAEARAAVNKARRSRIRTFLRKVEEAIATGDASVAAAALKTAQPELARGVTKGVLHKNTVARKMSRLAHRVKVLSQPAAA</sequence>
<name>RS20_CERS4</name>
<reference key="1">
    <citation type="submission" date="2005-09" db="EMBL/GenBank/DDBJ databases">
        <title>Complete sequence of chromosome 1 of Rhodobacter sphaeroides 2.4.1.</title>
        <authorList>
            <person name="Copeland A."/>
            <person name="Lucas S."/>
            <person name="Lapidus A."/>
            <person name="Barry K."/>
            <person name="Detter J.C."/>
            <person name="Glavina T."/>
            <person name="Hammon N."/>
            <person name="Israni S."/>
            <person name="Pitluck S."/>
            <person name="Richardson P."/>
            <person name="Mackenzie C."/>
            <person name="Choudhary M."/>
            <person name="Larimer F."/>
            <person name="Hauser L.J."/>
            <person name="Land M."/>
            <person name="Donohue T.J."/>
            <person name="Kaplan S."/>
        </authorList>
    </citation>
    <scope>NUCLEOTIDE SEQUENCE [LARGE SCALE GENOMIC DNA]</scope>
    <source>
        <strain>ATCC 17023 / DSM 158 / JCM 6121 / CCUG 31486 / LMG 2827 / NBRC 12203 / NCIMB 8253 / ATH 2.4.1.</strain>
    </source>
</reference>
<accession>Q3IY62</accession>